<gene>
    <name evidence="1" type="primary">recX</name>
    <name type="ordered locus">PP_1630</name>
</gene>
<accession>Q88ME3</accession>
<organism>
    <name type="scientific">Pseudomonas putida (strain ATCC 47054 / DSM 6125 / CFBP 8728 / NCIMB 11950 / KT2440)</name>
    <dbReference type="NCBI Taxonomy" id="160488"/>
    <lineage>
        <taxon>Bacteria</taxon>
        <taxon>Pseudomonadati</taxon>
        <taxon>Pseudomonadota</taxon>
        <taxon>Gammaproteobacteria</taxon>
        <taxon>Pseudomonadales</taxon>
        <taxon>Pseudomonadaceae</taxon>
        <taxon>Pseudomonas</taxon>
    </lineage>
</organism>
<proteinExistence type="inferred from homology"/>
<protein>
    <recommendedName>
        <fullName evidence="1">Regulatory protein RecX</fullName>
    </recommendedName>
</protein>
<comment type="function">
    <text evidence="1">Modulates RecA activity.</text>
</comment>
<comment type="subcellular location">
    <subcellularLocation>
        <location evidence="1">Cytoplasm</location>
    </subcellularLocation>
</comment>
<comment type="similarity">
    <text evidence="1">Belongs to the RecX family.</text>
</comment>
<evidence type="ECO:0000255" key="1">
    <source>
        <dbReference type="HAMAP-Rule" id="MF_01114"/>
    </source>
</evidence>
<name>RECX_PSEPK</name>
<sequence>MSAVLDTPVAIRRTAMDLLARREHGRVELTRKLRQRGASDELIEPELDRLAEEGLLSEARYLESFIRYRSGSGYGPARIREELCQRGLARADIDQALRESEVNWSERMRDVWQRKFAGQRPQDPRSRAQQTRFLAYRGFPMDMIGRLLSGRDLDDY</sequence>
<keyword id="KW-0963">Cytoplasm</keyword>
<keyword id="KW-1185">Reference proteome</keyword>
<reference key="1">
    <citation type="journal article" date="2002" name="Environ. Microbiol.">
        <title>Complete genome sequence and comparative analysis of the metabolically versatile Pseudomonas putida KT2440.</title>
        <authorList>
            <person name="Nelson K.E."/>
            <person name="Weinel C."/>
            <person name="Paulsen I.T."/>
            <person name="Dodson R.J."/>
            <person name="Hilbert H."/>
            <person name="Martins dos Santos V.A.P."/>
            <person name="Fouts D.E."/>
            <person name="Gill S.R."/>
            <person name="Pop M."/>
            <person name="Holmes M."/>
            <person name="Brinkac L.M."/>
            <person name="Beanan M.J."/>
            <person name="DeBoy R.T."/>
            <person name="Daugherty S.C."/>
            <person name="Kolonay J.F."/>
            <person name="Madupu R."/>
            <person name="Nelson W.C."/>
            <person name="White O."/>
            <person name="Peterson J.D."/>
            <person name="Khouri H.M."/>
            <person name="Hance I."/>
            <person name="Chris Lee P."/>
            <person name="Holtzapple E.K."/>
            <person name="Scanlan D."/>
            <person name="Tran K."/>
            <person name="Moazzez A."/>
            <person name="Utterback T.R."/>
            <person name="Rizzo M."/>
            <person name="Lee K."/>
            <person name="Kosack D."/>
            <person name="Moestl D."/>
            <person name="Wedler H."/>
            <person name="Lauber J."/>
            <person name="Stjepandic D."/>
            <person name="Hoheisel J."/>
            <person name="Straetz M."/>
            <person name="Heim S."/>
            <person name="Kiewitz C."/>
            <person name="Eisen J.A."/>
            <person name="Timmis K.N."/>
            <person name="Duesterhoeft A."/>
            <person name="Tuemmler B."/>
            <person name="Fraser C.M."/>
        </authorList>
    </citation>
    <scope>NUCLEOTIDE SEQUENCE [LARGE SCALE GENOMIC DNA]</scope>
    <source>
        <strain>ATCC 47054 / DSM 6125 / CFBP 8728 / NCIMB 11950 / KT2440</strain>
    </source>
</reference>
<feature type="chain" id="PRO_0000162461" description="Regulatory protein RecX">
    <location>
        <begin position="1"/>
        <end position="156"/>
    </location>
</feature>
<dbReference type="EMBL" id="AE015451">
    <property type="protein sequence ID" value="AAN67251.1"/>
    <property type="molecule type" value="Genomic_DNA"/>
</dbReference>
<dbReference type="RefSeq" id="NP_743787.1">
    <property type="nucleotide sequence ID" value="NC_002947.4"/>
</dbReference>
<dbReference type="RefSeq" id="WP_010952696.1">
    <property type="nucleotide sequence ID" value="NZ_CP169744.1"/>
</dbReference>
<dbReference type="SMR" id="Q88ME3"/>
<dbReference type="STRING" id="160488.PP_1630"/>
<dbReference type="PaxDb" id="160488-PP_1630"/>
<dbReference type="GeneID" id="83681892"/>
<dbReference type="KEGG" id="ppu:PP_1630"/>
<dbReference type="PATRIC" id="fig|160488.4.peg.1722"/>
<dbReference type="eggNOG" id="COG2137">
    <property type="taxonomic scope" value="Bacteria"/>
</dbReference>
<dbReference type="HOGENOM" id="CLU_066607_3_2_6"/>
<dbReference type="OrthoDB" id="7066780at2"/>
<dbReference type="PhylomeDB" id="Q88ME3"/>
<dbReference type="BioCyc" id="PPUT160488:G1G01-1728-MONOMER"/>
<dbReference type="Proteomes" id="UP000000556">
    <property type="component" value="Chromosome"/>
</dbReference>
<dbReference type="GO" id="GO:0005737">
    <property type="term" value="C:cytoplasm"/>
    <property type="evidence" value="ECO:0007669"/>
    <property type="project" value="UniProtKB-SubCell"/>
</dbReference>
<dbReference type="GO" id="GO:0006282">
    <property type="term" value="P:regulation of DNA repair"/>
    <property type="evidence" value="ECO:0007669"/>
    <property type="project" value="UniProtKB-UniRule"/>
</dbReference>
<dbReference type="Gene3D" id="1.10.10.10">
    <property type="entry name" value="Winged helix-like DNA-binding domain superfamily/Winged helix DNA-binding domain"/>
    <property type="match status" value="3"/>
</dbReference>
<dbReference type="HAMAP" id="MF_01114">
    <property type="entry name" value="RecX"/>
    <property type="match status" value="1"/>
</dbReference>
<dbReference type="InterPro" id="IPR053926">
    <property type="entry name" value="RecX_HTH_1st"/>
</dbReference>
<dbReference type="InterPro" id="IPR053924">
    <property type="entry name" value="RecX_HTH_2nd"/>
</dbReference>
<dbReference type="InterPro" id="IPR053925">
    <property type="entry name" value="RecX_HTH_3rd"/>
</dbReference>
<dbReference type="InterPro" id="IPR003783">
    <property type="entry name" value="Regulatory_RecX"/>
</dbReference>
<dbReference type="InterPro" id="IPR036388">
    <property type="entry name" value="WH-like_DNA-bd_sf"/>
</dbReference>
<dbReference type="NCBIfam" id="NF001054">
    <property type="entry name" value="PRK00117.2-1"/>
    <property type="match status" value="1"/>
</dbReference>
<dbReference type="PANTHER" id="PTHR33602">
    <property type="entry name" value="REGULATORY PROTEIN RECX FAMILY PROTEIN"/>
    <property type="match status" value="1"/>
</dbReference>
<dbReference type="PANTHER" id="PTHR33602:SF1">
    <property type="entry name" value="REGULATORY PROTEIN RECX FAMILY PROTEIN"/>
    <property type="match status" value="1"/>
</dbReference>
<dbReference type="Pfam" id="PF21982">
    <property type="entry name" value="RecX_HTH1"/>
    <property type="match status" value="1"/>
</dbReference>
<dbReference type="Pfam" id="PF02631">
    <property type="entry name" value="RecX_HTH2"/>
    <property type="match status" value="1"/>
</dbReference>
<dbReference type="Pfam" id="PF21981">
    <property type="entry name" value="RecX_HTH3"/>
    <property type="match status" value="1"/>
</dbReference>